<feature type="signal peptide" evidence="1">
    <location>
        <begin position="1"/>
        <end position="29"/>
    </location>
</feature>
<feature type="chain" id="PRO_0000298636" description="Uncharacterized leukocidin-like protein 1">
    <location>
        <begin position="30"/>
        <end position="338"/>
    </location>
</feature>
<accession>Q7A4L0</accession>
<keyword id="KW-0732">Signal</keyword>
<proteinExistence type="evidence at protein level"/>
<organism>
    <name type="scientific">Staphylococcus aureus (strain N315)</name>
    <dbReference type="NCBI Taxonomy" id="158879"/>
    <lineage>
        <taxon>Bacteria</taxon>
        <taxon>Bacillati</taxon>
        <taxon>Bacillota</taxon>
        <taxon>Bacilli</taxon>
        <taxon>Bacillales</taxon>
        <taxon>Staphylococcaceae</taxon>
        <taxon>Staphylococcus</taxon>
    </lineage>
</organism>
<name>LUKL1_STAAN</name>
<protein>
    <recommendedName>
        <fullName>Uncharacterized leukocidin-like protein 1</fullName>
    </recommendedName>
</protein>
<comment type="similarity">
    <text evidence="2">Belongs to the aerolysin family.</text>
</comment>
<sequence>MIKQLYKNITICSLAISTALTVFPATSYAKINSEIKAVSEKNLDGDTKMYTRTATTSDSQKNITQSLQFNFLTEPNYDKETVFIKAKGTIGSGLRILDPNGYWNSTLRWPGSYSVSIQNVDDNNNTNVTDFAPKNQDESREVKYTYGYKTGGDFSINRGGLTGNITKESNYSETISYQQPSYRTLLDQSTSHKGVGWKVEAHLINNMGHDHTRQLTNDSDNRTKSEIFSLTRNGNLWAKDNFTPKDKMPVTVSEGFNPEFLAVMSHDKKDKGKSQFVVHYKRSMDEFKIDWNRHGFWGYWSGENHVDKKEEKLSALYEVDWKTHDVKFVKVLNDNEKK</sequence>
<reference key="1">
    <citation type="journal article" date="2001" name="Lancet">
        <title>Whole genome sequencing of meticillin-resistant Staphylococcus aureus.</title>
        <authorList>
            <person name="Kuroda M."/>
            <person name="Ohta T."/>
            <person name="Uchiyama I."/>
            <person name="Baba T."/>
            <person name="Yuzawa H."/>
            <person name="Kobayashi I."/>
            <person name="Cui L."/>
            <person name="Oguchi A."/>
            <person name="Aoki K."/>
            <person name="Nagai Y."/>
            <person name="Lian J.-Q."/>
            <person name="Ito T."/>
            <person name="Kanamori M."/>
            <person name="Matsumaru H."/>
            <person name="Maruyama A."/>
            <person name="Murakami H."/>
            <person name="Hosoyama A."/>
            <person name="Mizutani-Ui Y."/>
            <person name="Takahashi N.K."/>
            <person name="Sawano T."/>
            <person name="Inoue R."/>
            <person name="Kaito C."/>
            <person name="Sekimizu K."/>
            <person name="Hirakawa H."/>
            <person name="Kuhara S."/>
            <person name="Goto S."/>
            <person name="Yabuzaki J."/>
            <person name="Kanehisa M."/>
            <person name="Yamashita A."/>
            <person name="Oshima K."/>
            <person name="Furuya K."/>
            <person name="Yoshino C."/>
            <person name="Shiba T."/>
            <person name="Hattori M."/>
            <person name="Ogasawara N."/>
            <person name="Hayashi H."/>
            <person name="Hiramatsu K."/>
        </authorList>
    </citation>
    <scope>NUCLEOTIDE SEQUENCE [LARGE SCALE GENOMIC DNA]</scope>
    <source>
        <strain>N315</strain>
    </source>
</reference>
<reference key="2">
    <citation type="submission" date="2007-10" db="UniProtKB">
        <title>Shotgun proteomic analysis of total and membrane protein extracts of S. aureus strain N315.</title>
        <authorList>
            <person name="Vaezzadeh A.R."/>
            <person name="Deshusses J."/>
            <person name="Lescuyer P."/>
            <person name="Hochstrasser D.F."/>
        </authorList>
    </citation>
    <scope>IDENTIFICATION BY MASS SPECTROMETRY [LARGE SCALE ANALYSIS]</scope>
    <source>
        <strain>N315</strain>
    </source>
</reference>
<dbReference type="EMBL" id="BA000018">
    <property type="protein sequence ID" value="BAB43092.1"/>
    <property type="molecule type" value="Genomic_DNA"/>
</dbReference>
<dbReference type="PIR" id="C89991">
    <property type="entry name" value="C89991"/>
</dbReference>
<dbReference type="SMR" id="Q7A4L0"/>
<dbReference type="EnsemblBacteria" id="BAB43092">
    <property type="protein sequence ID" value="BAB43092"/>
    <property type="gene ID" value="BAB43092"/>
</dbReference>
<dbReference type="KEGG" id="sau:SA1812"/>
<dbReference type="HOGENOM" id="CLU_055394_0_1_9"/>
<dbReference type="GO" id="GO:0005576">
    <property type="term" value="C:extracellular region"/>
    <property type="evidence" value="ECO:0007669"/>
    <property type="project" value="InterPro"/>
</dbReference>
<dbReference type="GO" id="GO:0051715">
    <property type="term" value="P:cytolysis in another organism"/>
    <property type="evidence" value="ECO:0007669"/>
    <property type="project" value="InterPro"/>
</dbReference>
<dbReference type="Gene3D" id="2.70.240.10">
    <property type="entry name" value="Leukocidin/porin MspA"/>
    <property type="match status" value="1"/>
</dbReference>
<dbReference type="InterPro" id="IPR003963">
    <property type="entry name" value="Bi-component_toxin_staph"/>
</dbReference>
<dbReference type="InterPro" id="IPR016183">
    <property type="entry name" value="Leukocidin/Hemolysin_toxin"/>
</dbReference>
<dbReference type="InterPro" id="IPR036435">
    <property type="entry name" value="Leukocidin/porin_MspA_sf"/>
</dbReference>
<dbReference type="NCBIfam" id="TIGR01002">
    <property type="entry name" value="hlyII"/>
    <property type="match status" value="1"/>
</dbReference>
<dbReference type="Pfam" id="PF07968">
    <property type="entry name" value="Leukocidin"/>
    <property type="match status" value="1"/>
</dbReference>
<dbReference type="PRINTS" id="PR01468">
    <property type="entry name" value="BICOMPNTOXIN"/>
</dbReference>
<dbReference type="SUPFAM" id="SSF56959">
    <property type="entry name" value="Leukocidin-like"/>
    <property type="match status" value="1"/>
</dbReference>
<gene>
    <name type="ordered locus">SA1812</name>
</gene>
<evidence type="ECO:0000255" key="1"/>
<evidence type="ECO:0000305" key="2"/>